<protein>
    <recommendedName>
        <fullName evidence="1">2,3-bisphosphoglycerate-independent phosphoglycerate mutase</fullName>
        <shortName evidence="1">BPG-independent PGAM</shortName>
        <shortName evidence="1">Phosphoglyceromutase</shortName>
        <shortName evidence="1">iPGM</shortName>
        <ecNumber evidence="1">5.4.2.12</ecNumber>
    </recommendedName>
</protein>
<sequence>MDAQSVAPVVLVILDGWGYREAPEGNAVLAARTPVVDSLWATYPHTLLQASGRAVGLPSGQMGNSEVGHLTLGAGRVVPQELVRISDAIETGSLFHEPLLVEVCHRLKEQGGRFHFIGLCSEGGVHSHIDHLYGLLKLAAQAGIPAYVHAITDGRDTLPRDGARVLAALEKELQWLGSGVIATLSGRYYAMDRDRRWERTQKAYEILTEDGPGCGRSAAEVMEDFYAQDITDEFIPPTRLAPGAVQSGDAVIFFNFRPDRARQLTQAFVCPDFSGFQRRLIPDLTFITMTQYDPTLPVQVLFKPQNLDHLLGQVVSEAGLKQLRIAETEKYAHVTYFFNGGIEQPFPGEDRILVQSPLVATYDQMPEMSAVEVTDKAIEAIARREYSLVVLNYANPDMVGHTGNFKATVRALETVDRCLGRLLAAVVDVGGTTLIVADHGNAELMWDEQGNPWTAHTNNPVPCILVEGERRKIPGRGGDVKLRSGGTLADVGPTLLEILGLPQPPEMTGQSLLQPAEYTILQRQPAPVGR</sequence>
<gene>
    <name evidence="1" type="primary">gpmI</name>
    <name type="ordered locus">CYA_2123</name>
</gene>
<name>GPMI_SYNJA</name>
<proteinExistence type="inferred from homology"/>
<evidence type="ECO:0000255" key="1">
    <source>
        <dbReference type="HAMAP-Rule" id="MF_01038"/>
    </source>
</evidence>
<dbReference type="EC" id="5.4.2.12" evidence="1"/>
<dbReference type="EMBL" id="CP000239">
    <property type="protein sequence ID" value="ABD00263.1"/>
    <property type="molecule type" value="Genomic_DNA"/>
</dbReference>
<dbReference type="RefSeq" id="WP_011430937.1">
    <property type="nucleotide sequence ID" value="NC_007775.1"/>
</dbReference>
<dbReference type="SMR" id="Q2JSV1"/>
<dbReference type="STRING" id="321327.CYA_2123"/>
<dbReference type="KEGG" id="cya:CYA_2123"/>
<dbReference type="eggNOG" id="COG0696">
    <property type="taxonomic scope" value="Bacteria"/>
</dbReference>
<dbReference type="HOGENOM" id="CLU_026099_2_0_3"/>
<dbReference type="OrthoDB" id="9800863at2"/>
<dbReference type="UniPathway" id="UPA00109">
    <property type="reaction ID" value="UER00186"/>
</dbReference>
<dbReference type="Proteomes" id="UP000008818">
    <property type="component" value="Chromosome"/>
</dbReference>
<dbReference type="GO" id="GO:0005829">
    <property type="term" value="C:cytosol"/>
    <property type="evidence" value="ECO:0007669"/>
    <property type="project" value="TreeGrafter"/>
</dbReference>
<dbReference type="GO" id="GO:0030145">
    <property type="term" value="F:manganese ion binding"/>
    <property type="evidence" value="ECO:0007669"/>
    <property type="project" value="UniProtKB-UniRule"/>
</dbReference>
<dbReference type="GO" id="GO:0004619">
    <property type="term" value="F:phosphoglycerate mutase activity"/>
    <property type="evidence" value="ECO:0007669"/>
    <property type="project" value="UniProtKB-EC"/>
</dbReference>
<dbReference type="GO" id="GO:0006007">
    <property type="term" value="P:glucose catabolic process"/>
    <property type="evidence" value="ECO:0007669"/>
    <property type="project" value="InterPro"/>
</dbReference>
<dbReference type="GO" id="GO:0006096">
    <property type="term" value="P:glycolytic process"/>
    <property type="evidence" value="ECO:0007669"/>
    <property type="project" value="UniProtKB-UniRule"/>
</dbReference>
<dbReference type="CDD" id="cd16010">
    <property type="entry name" value="iPGM"/>
    <property type="match status" value="1"/>
</dbReference>
<dbReference type="FunFam" id="3.40.1450.10:FF:000002">
    <property type="entry name" value="2,3-bisphosphoglycerate-independent phosphoglycerate mutase"/>
    <property type="match status" value="1"/>
</dbReference>
<dbReference type="Gene3D" id="3.40.720.10">
    <property type="entry name" value="Alkaline Phosphatase, subunit A"/>
    <property type="match status" value="1"/>
</dbReference>
<dbReference type="Gene3D" id="3.40.1450.10">
    <property type="entry name" value="BPG-independent phosphoglycerate mutase, domain B"/>
    <property type="match status" value="1"/>
</dbReference>
<dbReference type="HAMAP" id="MF_01038">
    <property type="entry name" value="GpmI"/>
    <property type="match status" value="1"/>
</dbReference>
<dbReference type="InterPro" id="IPR017850">
    <property type="entry name" value="Alkaline_phosphatase_core_sf"/>
</dbReference>
<dbReference type="InterPro" id="IPR011258">
    <property type="entry name" value="BPG-indep_PGM_N"/>
</dbReference>
<dbReference type="InterPro" id="IPR006124">
    <property type="entry name" value="Metalloenzyme"/>
</dbReference>
<dbReference type="InterPro" id="IPR036646">
    <property type="entry name" value="PGAM_B_sf"/>
</dbReference>
<dbReference type="InterPro" id="IPR005995">
    <property type="entry name" value="Pgm_bpd_ind"/>
</dbReference>
<dbReference type="NCBIfam" id="TIGR01307">
    <property type="entry name" value="pgm_bpd_ind"/>
    <property type="match status" value="1"/>
</dbReference>
<dbReference type="PANTHER" id="PTHR31637">
    <property type="entry name" value="2,3-BISPHOSPHOGLYCERATE-INDEPENDENT PHOSPHOGLYCERATE MUTASE"/>
    <property type="match status" value="1"/>
</dbReference>
<dbReference type="PANTHER" id="PTHR31637:SF0">
    <property type="entry name" value="2,3-BISPHOSPHOGLYCERATE-INDEPENDENT PHOSPHOGLYCERATE MUTASE"/>
    <property type="match status" value="1"/>
</dbReference>
<dbReference type="Pfam" id="PF06415">
    <property type="entry name" value="iPGM_N"/>
    <property type="match status" value="1"/>
</dbReference>
<dbReference type="Pfam" id="PF01676">
    <property type="entry name" value="Metalloenzyme"/>
    <property type="match status" value="1"/>
</dbReference>
<dbReference type="PIRSF" id="PIRSF001492">
    <property type="entry name" value="IPGAM"/>
    <property type="match status" value="1"/>
</dbReference>
<dbReference type="SUPFAM" id="SSF64158">
    <property type="entry name" value="2,3-Bisphosphoglycerate-independent phosphoglycerate mutase, substrate-binding domain"/>
    <property type="match status" value="1"/>
</dbReference>
<dbReference type="SUPFAM" id="SSF53649">
    <property type="entry name" value="Alkaline phosphatase-like"/>
    <property type="match status" value="1"/>
</dbReference>
<reference key="1">
    <citation type="journal article" date="2007" name="ISME J.">
        <title>Population level functional diversity in a microbial community revealed by comparative genomic and metagenomic analyses.</title>
        <authorList>
            <person name="Bhaya D."/>
            <person name="Grossman A.R."/>
            <person name="Steunou A.-S."/>
            <person name="Khuri N."/>
            <person name="Cohan F.M."/>
            <person name="Hamamura N."/>
            <person name="Melendrez M.C."/>
            <person name="Bateson M.M."/>
            <person name="Ward D.M."/>
            <person name="Heidelberg J.F."/>
        </authorList>
    </citation>
    <scope>NUCLEOTIDE SEQUENCE [LARGE SCALE GENOMIC DNA]</scope>
    <source>
        <strain>JA-3-3Ab</strain>
    </source>
</reference>
<keyword id="KW-0324">Glycolysis</keyword>
<keyword id="KW-0413">Isomerase</keyword>
<keyword id="KW-0464">Manganese</keyword>
<keyword id="KW-0479">Metal-binding</keyword>
<comment type="function">
    <text evidence="1">Catalyzes the interconversion of 2-phosphoglycerate and 3-phosphoglycerate.</text>
</comment>
<comment type="catalytic activity">
    <reaction evidence="1">
        <text>(2R)-2-phosphoglycerate = (2R)-3-phosphoglycerate</text>
        <dbReference type="Rhea" id="RHEA:15901"/>
        <dbReference type="ChEBI" id="CHEBI:58272"/>
        <dbReference type="ChEBI" id="CHEBI:58289"/>
        <dbReference type="EC" id="5.4.2.12"/>
    </reaction>
</comment>
<comment type="cofactor">
    <cofactor evidence="1">
        <name>Mn(2+)</name>
        <dbReference type="ChEBI" id="CHEBI:29035"/>
    </cofactor>
    <text evidence="1">Binds 2 manganese ions per subunit.</text>
</comment>
<comment type="pathway">
    <text evidence="1">Carbohydrate degradation; glycolysis; pyruvate from D-glyceraldehyde 3-phosphate: step 3/5.</text>
</comment>
<comment type="subunit">
    <text evidence="1">Monomer.</text>
</comment>
<comment type="similarity">
    <text evidence="1">Belongs to the BPG-independent phosphoglycerate mutase family.</text>
</comment>
<organism>
    <name type="scientific">Synechococcus sp. (strain JA-3-3Ab)</name>
    <name type="common">Cyanobacteria bacterium Yellowstone A-Prime</name>
    <dbReference type="NCBI Taxonomy" id="321327"/>
    <lineage>
        <taxon>Bacteria</taxon>
        <taxon>Bacillati</taxon>
        <taxon>Cyanobacteriota</taxon>
        <taxon>Cyanophyceae</taxon>
        <taxon>Synechococcales</taxon>
        <taxon>Synechococcaceae</taxon>
        <taxon>Synechococcus</taxon>
    </lineage>
</organism>
<feature type="chain" id="PRO_1000064011" description="2,3-bisphosphoglycerate-independent phosphoglycerate mutase">
    <location>
        <begin position="1"/>
        <end position="530"/>
    </location>
</feature>
<feature type="active site" description="Phosphoserine intermediate" evidence="1">
    <location>
        <position position="65"/>
    </location>
</feature>
<feature type="binding site" evidence="1">
    <location>
        <position position="15"/>
    </location>
    <ligand>
        <name>Mn(2+)</name>
        <dbReference type="ChEBI" id="CHEBI:29035"/>
        <label>2</label>
    </ligand>
</feature>
<feature type="binding site" evidence="1">
    <location>
        <position position="65"/>
    </location>
    <ligand>
        <name>Mn(2+)</name>
        <dbReference type="ChEBI" id="CHEBI:29035"/>
        <label>2</label>
    </ligand>
</feature>
<feature type="binding site" evidence="1">
    <location>
        <position position="126"/>
    </location>
    <ligand>
        <name>substrate</name>
    </ligand>
</feature>
<feature type="binding site" evidence="1">
    <location>
        <begin position="155"/>
        <end position="156"/>
    </location>
    <ligand>
        <name>substrate</name>
    </ligand>
</feature>
<feature type="binding site" evidence="1">
    <location>
        <position position="187"/>
    </location>
    <ligand>
        <name>substrate</name>
    </ligand>
</feature>
<feature type="binding site" evidence="1">
    <location>
        <position position="193"/>
    </location>
    <ligand>
        <name>substrate</name>
    </ligand>
</feature>
<feature type="binding site" evidence="1">
    <location>
        <begin position="257"/>
        <end position="260"/>
    </location>
    <ligand>
        <name>substrate</name>
    </ligand>
</feature>
<feature type="binding site" evidence="1">
    <location>
        <position position="330"/>
    </location>
    <ligand>
        <name>substrate</name>
    </ligand>
</feature>
<feature type="binding site" evidence="1">
    <location>
        <position position="397"/>
    </location>
    <ligand>
        <name>Mn(2+)</name>
        <dbReference type="ChEBI" id="CHEBI:29035"/>
        <label>1</label>
    </ligand>
</feature>
<feature type="binding site" evidence="1">
    <location>
        <position position="401"/>
    </location>
    <ligand>
        <name>Mn(2+)</name>
        <dbReference type="ChEBI" id="CHEBI:29035"/>
        <label>1</label>
    </ligand>
</feature>
<feature type="binding site" evidence="1">
    <location>
        <position position="438"/>
    </location>
    <ligand>
        <name>Mn(2+)</name>
        <dbReference type="ChEBI" id="CHEBI:29035"/>
        <label>2</label>
    </ligand>
</feature>
<feature type="binding site" evidence="1">
    <location>
        <position position="439"/>
    </location>
    <ligand>
        <name>Mn(2+)</name>
        <dbReference type="ChEBI" id="CHEBI:29035"/>
        <label>2</label>
    </ligand>
</feature>
<feature type="binding site" evidence="1">
    <location>
        <position position="456"/>
    </location>
    <ligand>
        <name>Mn(2+)</name>
        <dbReference type="ChEBI" id="CHEBI:29035"/>
        <label>1</label>
    </ligand>
</feature>
<accession>Q2JSV1</accession>